<reference key="1">
    <citation type="journal article" date="2005" name="Nature">
        <title>The genome of the social amoeba Dictyostelium discoideum.</title>
        <authorList>
            <person name="Eichinger L."/>
            <person name="Pachebat J.A."/>
            <person name="Gloeckner G."/>
            <person name="Rajandream M.A."/>
            <person name="Sucgang R."/>
            <person name="Berriman M."/>
            <person name="Song J."/>
            <person name="Olsen R."/>
            <person name="Szafranski K."/>
            <person name="Xu Q."/>
            <person name="Tunggal B."/>
            <person name="Kummerfeld S."/>
            <person name="Madera M."/>
            <person name="Konfortov B.A."/>
            <person name="Rivero F."/>
            <person name="Bankier A.T."/>
            <person name="Lehmann R."/>
            <person name="Hamlin N."/>
            <person name="Davies R."/>
            <person name="Gaudet P."/>
            <person name="Fey P."/>
            <person name="Pilcher K."/>
            <person name="Chen G."/>
            <person name="Saunders D."/>
            <person name="Sodergren E.J."/>
            <person name="Davis P."/>
            <person name="Kerhornou A."/>
            <person name="Nie X."/>
            <person name="Hall N."/>
            <person name="Anjard C."/>
            <person name="Hemphill L."/>
            <person name="Bason N."/>
            <person name="Farbrother P."/>
            <person name="Desany B."/>
            <person name="Just E."/>
            <person name="Morio T."/>
            <person name="Rost R."/>
            <person name="Churcher C.M."/>
            <person name="Cooper J."/>
            <person name="Haydock S."/>
            <person name="van Driessche N."/>
            <person name="Cronin A."/>
            <person name="Goodhead I."/>
            <person name="Muzny D.M."/>
            <person name="Mourier T."/>
            <person name="Pain A."/>
            <person name="Lu M."/>
            <person name="Harper D."/>
            <person name="Lindsay R."/>
            <person name="Hauser H."/>
            <person name="James K.D."/>
            <person name="Quiles M."/>
            <person name="Madan Babu M."/>
            <person name="Saito T."/>
            <person name="Buchrieser C."/>
            <person name="Wardroper A."/>
            <person name="Felder M."/>
            <person name="Thangavelu M."/>
            <person name="Johnson D."/>
            <person name="Knights A."/>
            <person name="Loulseged H."/>
            <person name="Mungall K.L."/>
            <person name="Oliver K."/>
            <person name="Price C."/>
            <person name="Quail M.A."/>
            <person name="Urushihara H."/>
            <person name="Hernandez J."/>
            <person name="Rabbinowitsch E."/>
            <person name="Steffen D."/>
            <person name="Sanders M."/>
            <person name="Ma J."/>
            <person name="Kohara Y."/>
            <person name="Sharp S."/>
            <person name="Simmonds M.N."/>
            <person name="Spiegler S."/>
            <person name="Tivey A."/>
            <person name="Sugano S."/>
            <person name="White B."/>
            <person name="Walker D."/>
            <person name="Woodward J.R."/>
            <person name="Winckler T."/>
            <person name="Tanaka Y."/>
            <person name="Shaulsky G."/>
            <person name="Schleicher M."/>
            <person name="Weinstock G.M."/>
            <person name="Rosenthal A."/>
            <person name="Cox E.C."/>
            <person name="Chisholm R.L."/>
            <person name="Gibbs R.A."/>
            <person name="Loomis W.F."/>
            <person name="Platzer M."/>
            <person name="Kay R.R."/>
            <person name="Williams J.G."/>
            <person name="Dear P.H."/>
            <person name="Noegel A.A."/>
            <person name="Barrell B.G."/>
            <person name="Kuspa A."/>
        </authorList>
    </citation>
    <scope>NUCLEOTIDE SEQUENCE [LARGE SCALE GENOMIC DNA]</scope>
    <source>
        <strain>AX4</strain>
    </source>
</reference>
<accession>Q54DY7</accession>
<organism>
    <name type="scientific">Dictyostelium discoideum</name>
    <name type="common">Social amoeba</name>
    <dbReference type="NCBI Taxonomy" id="44689"/>
    <lineage>
        <taxon>Eukaryota</taxon>
        <taxon>Amoebozoa</taxon>
        <taxon>Evosea</taxon>
        <taxon>Eumycetozoa</taxon>
        <taxon>Dictyostelia</taxon>
        <taxon>Dictyosteliales</taxon>
        <taxon>Dictyosteliaceae</taxon>
        <taxon>Dictyostelium</taxon>
    </lineage>
</organism>
<comment type="function">
    <text evidence="1">Probable carboxypeptidase.</text>
</comment>
<comment type="subcellular location">
    <subcellularLocation>
        <location evidence="4">Secreted</location>
    </subcellularLocation>
</comment>
<comment type="similarity">
    <text evidence="4">Belongs to the peptidase S10 family.</text>
</comment>
<name>SCPL1_DICDI</name>
<keyword id="KW-0121">Carboxypeptidase</keyword>
<keyword id="KW-0325">Glycoprotein</keyword>
<keyword id="KW-0378">Hydrolase</keyword>
<keyword id="KW-0645">Protease</keyword>
<keyword id="KW-1185">Reference proteome</keyword>
<keyword id="KW-0964">Secreted</keyword>
<keyword id="KW-0732">Signal</keyword>
<keyword id="KW-0865">Zymogen</keyword>
<feature type="signal peptide" evidence="2">
    <location>
        <begin position="1"/>
        <end position="20"/>
    </location>
</feature>
<feature type="propeptide" id="PRO_0000331588" evidence="2">
    <location>
        <begin position="21"/>
        <end status="unknown"/>
    </location>
</feature>
<feature type="chain" id="PRO_0000331589" description="Serine carboxypeptidase S10 family member 1">
    <location>
        <begin status="unknown"/>
        <end position="416"/>
    </location>
</feature>
<feature type="active site" evidence="3">
    <location>
        <position position="156"/>
    </location>
</feature>
<feature type="active site" evidence="3">
    <location>
        <position position="338"/>
    </location>
</feature>
<feature type="active site" evidence="3">
    <location>
        <position position="396"/>
    </location>
</feature>
<feature type="glycosylation site" description="N-linked (GlcNAc...) asparagine" evidence="2">
    <location>
        <position position="33"/>
    </location>
</feature>
<feature type="glycosylation site" description="N-linked (GlcNAc...) asparagine" evidence="2">
    <location>
        <position position="84"/>
    </location>
</feature>
<feature type="glycosylation site" description="N-linked (GlcNAc...) asparagine" evidence="2">
    <location>
        <position position="235"/>
    </location>
</feature>
<feature type="glycosylation site" description="N-linked (GlcNAc...) asparagine" evidence="2">
    <location>
        <position position="273"/>
    </location>
</feature>
<feature type="glycosylation site" description="N-linked (GlcNAc...) asparagine" evidence="2">
    <location>
        <position position="295"/>
    </location>
</feature>
<feature type="glycosylation site" description="N-linked (GlcNAc...) asparagine" evidence="2">
    <location>
        <position position="385"/>
    </location>
</feature>
<protein>
    <recommendedName>
        <fullName>Serine carboxypeptidase S10 family member 1</fullName>
        <ecNumber>3.4.16.-</ecNumber>
    </recommendedName>
</protein>
<dbReference type="EC" id="3.4.16.-"/>
<dbReference type="EMBL" id="AAFI02000186">
    <property type="protein sequence ID" value="EAL61486.1"/>
    <property type="molecule type" value="Genomic_DNA"/>
</dbReference>
<dbReference type="RefSeq" id="XP_629909.1">
    <property type="nucleotide sequence ID" value="XM_629907.1"/>
</dbReference>
<dbReference type="SMR" id="Q54DY7"/>
<dbReference type="FunCoup" id="Q54DY7">
    <property type="interactions" value="20"/>
</dbReference>
<dbReference type="STRING" id="44689.Q54DY7"/>
<dbReference type="ESTHER" id="dicdi-q54dy7">
    <property type="family name" value="Carboxypeptidase_S10"/>
</dbReference>
<dbReference type="MEROPS" id="S10.009"/>
<dbReference type="GlyGen" id="Q54DY7">
    <property type="glycosylation" value="6 sites"/>
</dbReference>
<dbReference type="PaxDb" id="44689-DDB0266717"/>
<dbReference type="EnsemblProtists" id="EAL61486">
    <property type="protein sequence ID" value="EAL61486"/>
    <property type="gene ID" value="DDB_G0291912"/>
</dbReference>
<dbReference type="GeneID" id="8628410"/>
<dbReference type="KEGG" id="ddi:DDB_G0291912"/>
<dbReference type="dictyBase" id="DDB_G0291912"/>
<dbReference type="VEuPathDB" id="AmoebaDB:DDB_G0291912"/>
<dbReference type="eggNOG" id="KOG1282">
    <property type="taxonomic scope" value="Eukaryota"/>
</dbReference>
<dbReference type="HOGENOM" id="CLU_008523_10_1_1"/>
<dbReference type="InParanoid" id="Q54DY7"/>
<dbReference type="OMA" id="TSCDDTV"/>
<dbReference type="PhylomeDB" id="Q54DY7"/>
<dbReference type="PRO" id="PR:Q54DY7"/>
<dbReference type="Proteomes" id="UP000002195">
    <property type="component" value="Chromosome 6"/>
</dbReference>
<dbReference type="GO" id="GO:0005576">
    <property type="term" value="C:extracellular region"/>
    <property type="evidence" value="ECO:0007669"/>
    <property type="project" value="UniProtKB-SubCell"/>
</dbReference>
<dbReference type="GO" id="GO:0004185">
    <property type="term" value="F:serine-type carboxypeptidase activity"/>
    <property type="evidence" value="ECO:0000318"/>
    <property type="project" value="GO_Central"/>
</dbReference>
<dbReference type="GO" id="GO:0006508">
    <property type="term" value="P:proteolysis"/>
    <property type="evidence" value="ECO:0007669"/>
    <property type="project" value="UniProtKB-KW"/>
</dbReference>
<dbReference type="Gene3D" id="3.40.50.1820">
    <property type="entry name" value="alpha/beta hydrolase"/>
    <property type="match status" value="1"/>
</dbReference>
<dbReference type="InterPro" id="IPR029058">
    <property type="entry name" value="AB_hydrolase_fold"/>
</dbReference>
<dbReference type="InterPro" id="IPR001563">
    <property type="entry name" value="Peptidase_S10"/>
</dbReference>
<dbReference type="InterPro" id="IPR018202">
    <property type="entry name" value="Ser_caboxypep_ser_AS"/>
</dbReference>
<dbReference type="PANTHER" id="PTHR11802:SF113">
    <property type="entry name" value="SERINE CARBOXYPEPTIDASE CTSA-4.1"/>
    <property type="match status" value="1"/>
</dbReference>
<dbReference type="PANTHER" id="PTHR11802">
    <property type="entry name" value="SERINE PROTEASE FAMILY S10 SERINE CARBOXYPEPTIDASE"/>
    <property type="match status" value="1"/>
</dbReference>
<dbReference type="Pfam" id="PF00450">
    <property type="entry name" value="Peptidase_S10"/>
    <property type="match status" value="1"/>
</dbReference>
<dbReference type="PRINTS" id="PR00724">
    <property type="entry name" value="CRBOXYPTASEC"/>
</dbReference>
<dbReference type="SUPFAM" id="SSF53474">
    <property type="entry name" value="alpha/beta-Hydrolases"/>
    <property type="match status" value="1"/>
</dbReference>
<dbReference type="PROSITE" id="PS00131">
    <property type="entry name" value="CARBOXYPEPT_SER_SER"/>
    <property type="match status" value="1"/>
</dbReference>
<proteinExistence type="inferred from homology"/>
<sequence>MMKLLFIIISIIFVINVSNSTPTLQLSGYFNVNETTNANLFYLFYESQNSPSTDPLILWLTGGPGCSSLMAAFYENGPYFVNDNLTLSENPNSWNMVANVLYVDSPLGAGFSYVVDSDGYSTTETEISENLYSFLTQFLSKYPKYSKLPLYIFGESYAGHYVPSFSYYIYQKNLGLATINLKGLAIGNGMVDPYIQYGSLGPFAYAHGMLDINALKETEGLYESCQQAIDSGDYNMTTQICNNIMDIVQEYAGNFNVYDVSKTCYPNEPLCYNFTAIIDYLNLASTKQSFGVLPNSTWNVCSTQPYSAIIRDWFNTPINYIPTLLENYKVLVYNGNYDWICNFLGSTEWTSQLKWKYNQEFNNSPRKILYINGNTISGYSQSYDNLTMQVLLGASHMAPREAPVAALAMVESFIQN</sequence>
<evidence type="ECO:0000250" key="1"/>
<evidence type="ECO:0000255" key="2"/>
<evidence type="ECO:0000255" key="3">
    <source>
        <dbReference type="PROSITE-ProRule" id="PRU10074"/>
    </source>
</evidence>
<evidence type="ECO:0000305" key="4"/>
<gene>
    <name type="ORF">DDB_G0291912</name>
</gene>